<name>FAM3C_XENTR</name>
<organism>
    <name type="scientific">Xenopus tropicalis</name>
    <name type="common">Western clawed frog</name>
    <name type="synonym">Silurana tropicalis</name>
    <dbReference type="NCBI Taxonomy" id="8364"/>
    <lineage>
        <taxon>Eukaryota</taxon>
        <taxon>Metazoa</taxon>
        <taxon>Chordata</taxon>
        <taxon>Craniata</taxon>
        <taxon>Vertebrata</taxon>
        <taxon>Euteleostomi</taxon>
        <taxon>Amphibia</taxon>
        <taxon>Batrachia</taxon>
        <taxon>Anura</taxon>
        <taxon>Pipoidea</taxon>
        <taxon>Pipidae</taxon>
        <taxon>Xenopodinae</taxon>
        <taxon>Xenopus</taxon>
        <taxon>Silurana</taxon>
    </lineage>
</organism>
<accession>B0BLS9</accession>
<feature type="signal peptide" evidence="2">
    <location>
        <begin position="1"/>
        <end position="24"/>
    </location>
</feature>
<feature type="chain" id="PRO_0000395985" description="Protein FAM3C">
    <location>
        <begin position="25"/>
        <end position="229"/>
    </location>
</feature>
<feature type="domain" description="GG-type lectin" evidence="3">
    <location>
        <begin position="68"/>
        <end position="226"/>
    </location>
</feature>
<feature type="disulfide bond" evidence="1">
    <location>
        <begin position="59"/>
        <end position="87"/>
    </location>
</feature>
<feature type="disulfide bond" evidence="1">
    <location>
        <begin position="65"/>
        <end position="222"/>
    </location>
</feature>
<reference key="1">
    <citation type="submission" date="2008-01" db="EMBL/GenBank/DDBJ databases">
        <authorList>
            <consortium name="NIH - Xenopus Gene Collection (XGC) project"/>
        </authorList>
    </citation>
    <scope>NUCLEOTIDE SEQUENCE [LARGE SCALE MRNA]</scope>
    <source>
        <tissue>Embryo</tissue>
    </source>
</reference>
<keyword id="KW-0217">Developmental protein</keyword>
<keyword id="KW-1015">Disulfide bond</keyword>
<keyword id="KW-0430">Lectin</keyword>
<keyword id="KW-1185">Reference proteome</keyword>
<keyword id="KW-0964">Secreted</keyword>
<keyword id="KW-0732">Signal</keyword>
<comment type="function">
    <text evidence="1">Involved in retinal laminar formation.</text>
</comment>
<comment type="subcellular location">
    <subcellularLocation>
        <location evidence="1">Secreted</location>
    </subcellularLocation>
</comment>
<comment type="similarity">
    <text evidence="4">Belongs to the FAM3 family.</text>
</comment>
<protein>
    <recommendedName>
        <fullName>Protein FAM3C</fullName>
    </recommendedName>
</protein>
<gene>
    <name type="primary">fam3c</name>
</gene>
<dbReference type="EMBL" id="BC158148">
    <property type="protein sequence ID" value="AAI58149.1"/>
    <property type="molecule type" value="mRNA"/>
</dbReference>
<dbReference type="RefSeq" id="NP_001017106.2">
    <property type="nucleotide sequence ID" value="NM_001017106.3"/>
</dbReference>
<dbReference type="SMR" id="B0BLS9"/>
<dbReference type="FunCoup" id="B0BLS9">
    <property type="interactions" value="938"/>
</dbReference>
<dbReference type="STRING" id="8364.ENSXETP00000050474"/>
<dbReference type="PaxDb" id="8364-ENSXETP00000049183"/>
<dbReference type="GeneID" id="549860"/>
<dbReference type="KEGG" id="xtr:549860"/>
<dbReference type="AGR" id="Xenbase:XB-GENE-943493"/>
<dbReference type="CTD" id="10447"/>
<dbReference type="Xenbase" id="XB-GENE-943493">
    <property type="gene designation" value="fam3c"/>
</dbReference>
<dbReference type="eggNOG" id="ENOG502QQR8">
    <property type="taxonomic scope" value="Eukaryota"/>
</dbReference>
<dbReference type="HOGENOM" id="CLU_099478_0_0_1"/>
<dbReference type="InParanoid" id="B0BLS9"/>
<dbReference type="OMA" id="KACPANH"/>
<dbReference type="OrthoDB" id="440755at2759"/>
<dbReference type="PhylomeDB" id="B0BLS9"/>
<dbReference type="TreeFam" id="TF353414"/>
<dbReference type="Reactome" id="R-XTR-114608">
    <property type="pathway name" value="Platelet degranulation"/>
</dbReference>
<dbReference type="Proteomes" id="UP000008143">
    <property type="component" value="Chromosome 3"/>
</dbReference>
<dbReference type="Bgee" id="ENSXETG00000022730">
    <property type="expression patterns" value="Expressed in egg cell and 12 other cell types or tissues"/>
</dbReference>
<dbReference type="GO" id="GO:0005576">
    <property type="term" value="C:extracellular region"/>
    <property type="evidence" value="ECO:0007669"/>
    <property type="project" value="UniProtKB-SubCell"/>
</dbReference>
<dbReference type="GO" id="GO:0030246">
    <property type="term" value="F:carbohydrate binding"/>
    <property type="evidence" value="ECO:0007669"/>
    <property type="project" value="UniProtKB-KW"/>
</dbReference>
<dbReference type="CDD" id="cd13940">
    <property type="entry name" value="ILEI_FAM3C"/>
    <property type="match status" value="1"/>
</dbReference>
<dbReference type="InterPro" id="IPR039220">
    <property type="entry name" value="FAM3"/>
</dbReference>
<dbReference type="InterPro" id="IPR039477">
    <property type="entry name" value="ILEI/PANDER_dom"/>
</dbReference>
<dbReference type="InterPro" id="IPR039475">
    <property type="entry name" value="ILEI_FAM3C"/>
</dbReference>
<dbReference type="PANTHER" id="PTHR14592">
    <property type="entry name" value="UNCHARACTERIZED FAM3"/>
    <property type="match status" value="1"/>
</dbReference>
<dbReference type="Pfam" id="PF15711">
    <property type="entry name" value="ILEI"/>
    <property type="match status" value="1"/>
</dbReference>
<dbReference type="PROSITE" id="PS52031">
    <property type="entry name" value="GG_LECTIN"/>
    <property type="match status" value="1"/>
</dbReference>
<sequence>MRIAGAIKFVIAVALFLLTFYVISQVFEIKMYSNLGNIFARSAPDTVAHPTTKAPRYRCGISKVCPEKHFAFKIASGAANVVGPKICVDDNILMSGVKNNVGRGINTALVNGKTGALIETTYHDLWGGEVGPFIEFLKKIPDGTIVLMATYDDGATKLNDDARKRIAELGSSLISVLAFRDNWVFVGGKGIKTKSPFEQHIKNNKDTNKYEGWPEVVEMEGCIPQKINE</sequence>
<proteinExistence type="evidence at transcript level"/>
<evidence type="ECO:0000250" key="1"/>
<evidence type="ECO:0000255" key="2"/>
<evidence type="ECO:0000255" key="3">
    <source>
        <dbReference type="PROSITE-ProRule" id="PRU01375"/>
    </source>
</evidence>
<evidence type="ECO:0000305" key="4"/>